<name>THRSP_MOUSE</name>
<reference key="1">
    <citation type="journal article" date="1997" name="FEBS Lett.">
        <title>Cloning and initial characterization of human and mouse Spot 14 genes.</title>
        <authorList>
            <person name="Grillasca J.-P."/>
            <person name="Gastaldi M."/>
            <person name="Khiri H."/>
            <person name="Dace A."/>
            <person name="Peyrol N."/>
            <person name="Reynier P."/>
            <person name="Torresani J."/>
            <person name="Planells R."/>
        </authorList>
    </citation>
    <scope>NUCLEOTIDE SEQUENCE [GENOMIC DNA]</scope>
    <source>
        <strain>BALB/cJ</strain>
    </source>
</reference>
<reference key="2">
    <citation type="journal article" date="2004" name="Genome Res.">
        <title>The status, quality, and expansion of the NIH full-length cDNA project: the Mammalian Gene Collection (MGC).</title>
        <authorList>
            <consortium name="The MGC Project Team"/>
        </authorList>
    </citation>
    <scope>NUCLEOTIDE SEQUENCE [LARGE SCALE MRNA]</scope>
    <source>
        <tissue>Mammary gland</tissue>
    </source>
</reference>
<reference key="3">
    <citation type="journal article" date="2001" name="Endocrinology">
        <title>Spot 14 gene deletion increases hepatic de novo lipogenesis.</title>
        <authorList>
            <person name="Zhu Q."/>
            <person name="Mariash A."/>
            <person name="Margosian M.R."/>
            <person name="Gopinath S."/>
            <person name="Fareed M.T."/>
            <person name="Anderson G.W."/>
            <person name="Mariash C.N."/>
        </authorList>
    </citation>
    <scope>DISRUPTION PHENOTYPE</scope>
</reference>
<reference key="4">
    <citation type="journal article" date="2005" name="Endocrinology">
        <title>The Spot 14 protein is required for de novo lipid synthesis in the lactating mammary gland.</title>
        <authorList>
            <person name="Zhu Q."/>
            <person name="Anderson G.W."/>
            <person name="Mucha G.T."/>
            <person name="Parks E.J."/>
            <person name="Metkowski J.K."/>
            <person name="Mariash C.N."/>
        </authorList>
    </citation>
    <scope>DISRUPTION PHENOTYPE</scope>
    <scope>FUNCTION</scope>
    <scope>TISSUE SPECIFICITY</scope>
</reference>
<reference key="5">
    <citation type="journal article" date="2009" name="Mol. Cell. Endocrinol.">
        <title>The Thrsp null mouse (Thrsp(tm1cnm)) and diet-induced obesity.</title>
        <authorList>
            <person name="Anderson G.W."/>
            <person name="Zhu Q."/>
            <person name="Metkowski J."/>
            <person name="Stack M.J."/>
            <person name="Gopinath S."/>
            <person name="Mariash C.N."/>
        </authorList>
    </citation>
    <scope>DISRUPTION PHENOTYPE</scope>
</reference>
<reference key="6">
    <citation type="journal article" date="2010" name="Cell">
        <title>A tissue-specific atlas of mouse protein phosphorylation and expression.</title>
        <authorList>
            <person name="Huttlin E.L."/>
            <person name="Jedrychowski M.P."/>
            <person name="Elias J.E."/>
            <person name="Goswami T."/>
            <person name="Rad R."/>
            <person name="Beausoleil S.A."/>
            <person name="Villen J."/>
            <person name="Haas W."/>
            <person name="Sowa M.E."/>
            <person name="Gygi S.P."/>
        </authorList>
    </citation>
    <scope>IDENTIFICATION BY MASS SPECTROMETRY [LARGE SCALE ANALYSIS]</scope>
    <source>
        <tissue>Brain</tissue>
        <tissue>Brown adipose tissue</tissue>
        <tissue>Heart</tissue>
        <tissue>Kidney</tissue>
        <tissue>Liver</tissue>
        <tissue>Lung</tissue>
        <tissue>Pancreas</tissue>
    </source>
</reference>
<reference key="7">
    <citation type="journal article" date="2010" name="Proc. Natl. Acad. Sci. U.S.A.">
        <title>Crystal structure of Spot 14, a modulator of fatty acid synthesis.</title>
        <authorList>
            <person name="Colbert C.L."/>
            <person name="Kim C.W."/>
            <person name="Moon Y.A."/>
            <person name="Henry L."/>
            <person name="Palnitkar M."/>
            <person name="McKean W.B."/>
            <person name="Fitzgerald K."/>
            <person name="Deisenhofer J."/>
            <person name="Horton J.D."/>
            <person name="Kwon H.J."/>
        </authorList>
    </citation>
    <scope>X-RAY CRYSTALLOGRAPHY (2.65 ANGSTROMS)</scope>
    <scope>FUNCTION</scope>
    <scope>INTERACTION WITH MID1IP1</scope>
    <scope>SUBCELLULAR LOCATION</scope>
</reference>
<protein>
    <recommendedName>
        <fullName>Thyroid hormone-inducible hepatic protein</fullName>
    </recommendedName>
    <alternativeName>
        <fullName>Spot 14 protein</fullName>
        <shortName>S14</shortName>
        <shortName>SPOT14</shortName>
    </alternativeName>
</protein>
<sequence length="150" mass="17093">MQVLTKRYPKNCLLTVMDRYSAVVRNMEQVVMIPSLLRDVQLSGPGGSVQDGAPDLYTYFTMLKSICVEVDHGLLPREEWQAKVAGNETSEAENDAAETEEAEEDRISEELDLEAQFHLHFCSLHHILTHLTRKAQEVTRKYQEMTGQVL</sequence>
<evidence type="ECO:0000250" key="1"/>
<evidence type="ECO:0000250" key="2">
    <source>
        <dbReference type="UniProtKB" id="P04143"/>
    </source>
</evidence>
<evidence type="ECO:0000256" key="3">
    <source>
        <dbReference type="SAM" id="MobiDB-lite"/>
    </source>
</evidence>
<evidence type="ECO:0000269" key="4">
    <source>
    </source>
</evidence>
<evidence type="ECO:0000269" key="5">
    <source>
    </source>
</evidence>
<evidence type="ECO:0000269" key="6">
    <source>
    </source>
</evidence>
<evidence type="ECO:0000269" key="7">
    <source>
    </source>
</evidence>
<evidence type="ECO:0000305" key="8"/>
<evidence type="ECO:0007829" key="9">
    <source>
        <dbReference type="PDB" id="3ONT"/>
    </source>
</evidence>
<dbReference type="EMBL" id="X95279">
    <property type="protein sequence ID" value="CAA64600.1"/>
    <property type="molecule type" value="Genomic_DNA"/>
</dbReference>
<dbReference type="EMBL" id="BC009165">
    <property type="protein sequence ID" value="AAH09165.1"/>
    <property type="molecule type" value="mRNA"/>
</dbReference>
<dbReference type="CCDS" id="CCDS21458.1"/>
<dbReference type="RefSeq" id="NP_033407.1">
    <property type="nucleotide sequence ID" value="NM_009381.3"/>
</dbReference>
<dbReference type="PDB" id="3ONT">
    <property type="method" value="X-ray"/>
    <property type="resolution" value="2.65 A"/>
    <property type="chains" value="A=1-150"/>
</dbReference>
<dbReference type="PDBsum" id="3ONT"/>
<dbReference type="SMR" id="Q62264"/>
<dbReference type="DIP" id="DIP-59527N"/>
<dbReference type="FunCoup" id="Q62264">
    <property type="interactions" value="561"/>
</dbReference>
<dbReference type="IntAct" id="Q62264">
    <property type="interactions" value="2"/>
</dbReference>
<dbReference type="STRING" id="10090.ENSMUSP00000042988"/>
<dbReference type="iPTMnet" id="Q62264"/>
<dbReference type="PhosphoSitePlus" id="Q62264"/>
<dbReference type="SwissPalm" id="Q62264"/>
<dbReference type="jPOST" id="Q62264"/>
<dbReference type="PaxDb" id="10090-ENSMUSP00000042988"/>
<dbReference type="ProteomicsDB" id="258874"/>
<dbReference type="Antibodypedia" id="31292">
    <property type="antibodies" value="195 antibodies from 31 providers"/>
</dbReference>
<dbReference type="DNASU" id="21835"/>
<dbReference type="Ensembl" id="ENSMUST00000043077.8">
    <property type="protein sequence ID" value="ENSMUSP00000042988.8"/>
    <property type="gene ID" value="ENSMUSG00000035686.9"/>
</dbReference>
<dbReference type="GeneID" id="21835"/>
<dbReference type="KEGG" id="mmu:21835"/>
<dbReference type="UCSC" id="uc009ije.1">
    <property type="organism name" value="mouse"/>
</dbReference>
<dbReference type="AGR" id="MGI:109126"/>
<dbReference type="CTD" id="7069"/>
<dbReference type="MGI" id="MGI:109126">
    <property type="gene designation" value="Thrsp"/>
</dbReference>
<dbReference type="VEuPathDB" id="HostDB:ENSMUSG00000035686"/>
<dbReference type="eggNOG" id="ENOG502S7IQ">
    <property type="taxonomic scope" value="Eukaryota"/>
</dbReference>
<dbReference type="GeneTree" id="ENSGT00500000044890"/>
<dbReference type="HOGENOM" id="CLU_066079_1_0_1"/>
<dbReference type="InParanoid" id="Q62264"/>
<dbReference type="OMA" id="FASLHHI"/>
<dbReference type="OrthoDB" id="9450804at2759"/>
<dbReference type="PhylomeDB" id="Q62264"/>
<dbReference type="TreeFam" id="TF326826"/>
<dbReference type="Reactome" id="R-MMU-200425">
    <property type="pathway name" value="Carnitine shuttle"/>
</dbReference>
<dbReference type="BioGRID-ORCS" id="21835">
    <property type="hits" value="3 hits in 78 CRISPR screens"/>
</dbReference>
<dbReference type="ChiTaRS" id="Thrsp">
    <property type="organism name" value="mouse"/>
</dbReference>
<dbReference type="EvolutionaryTrace" id="Q62264"/>
<dbReference type="PRO" id="PR:Q62264"/>
<dbReference type="Proteomes" id="UP000000589">
    <property type="component" value="Chromosome 7"/>
</dbReference>
<dbReference type="RNAct" id="Q62264">
    <property type="molecule type" value="protein"/>
</dbReference>
<dbReference type="Bgee" id="ENSMUSG00000035686">
    <property type="expression patterns" value="Expressed in aorta tunica adventitia and 218 other cell types or tissues"/>
</dbReference>
<dbReference type="ExpressionAtlas" id="Q62264">
    <property type="expression patterns" value="baseline and differential"/>
</dbReference>
<dbReference type="GO" id="GO:0005829">
    <property type="term" value="C:cytosol"/>
    <property type="evidence" value="ECO:0000314"/>
    <property type="project" value="UniProtKB"/>
</dbReference>
<dbReference type="GO" id="GO:0005654">
    <property type="term" value="C:nucleoplasm"/>
    <property type="evidence" value="ECO:0007669"/>
    <property type="project" value="Ensembl"/>
</dbReference>
<dbReference type="GO" id="GO:0032991">
    <property type="term" value="C:protein-containing complex"/>
    <property type="evidence" value="ECO:0000266"/>
    <property type="project" value="MGI"/>
</dbReference>
<dbReference type="GO" id="GO:0042802">
    <property type="term" value="F:identical protein binding"/>
    <property type="evidence" value="ECO:0000353"/>
    <property type="project" value="IntAct"/>
</dbReference>
<dbReference type="GO" id="GO:0140678">
    <property type="term" value="F:molecular function inhibitor activity"/>
    <property type="evidence" value="ECO:0000314"/>
    <property type="project" value="DisProt"/>
</dbReference>
<dbReference type="GO" id="GO:0042803">
    <property type="term" value="F:protein homodimerization activity"/>
    <property type="evidence" value="ECO:0000353"/>
    <property type="project" value="UniProtKB"/>
</dbReference>
<dbReference type="GO" id="GO:0006629">
    <property type="term" value="P:lipid metabolic process"/>
    <property type="evidence" value="ECO:0007669"/>
    <property type="project" value="UniProtKB-KW"/>
</dbReference>
<dbReference type="GO" id="GO:0046890">
    <property type="term" value="P:regulation of lipid biosynthetic process"/>
    <property type="evidence" value="ECO:0000315"/>
    <property type="project" value="UniProtKB"/>
</dbReference>
<dbReference type="GO" id="GO:0010866">
    <property type="term" value="P:regulation of triglyceride biosynthetic process"/>
    <property type="evidence" value="ECO:0000315"/>
    <property type="project" value="UniProtKB"/>
</dbReference>
<dbReference type="GO" id="GO:0009617">
    <property type="term" value="P:response to bacterium"/>
    <property type="evidence" value="ECO:0000270"/>
    <property type="project" value="MGI"/>
</dbReference>
<dbReference type="DisProt" id="DP02820"/>
<dbReference type="Gene3D" id="6.10.140.1610">
    <property type="match status" value="1"/>
</dbReference>
<dbReference type="InterPro" id="IPR053719">
    <property type="entry name" value="Lipogen_MT_Stabilize_sf"/>
</dbReference>
<dbReference type="InterPro" id="IPR009786">
    <property type="entry name" value="Spot_14"/>
</dbReference>
<dbReference type="PANTHER" id="PTHR14315">
    <property type="entry name" value="SPOT14 FAMILY MEMBER"/>
    <property type="match status" value="1"/>
</dbReference>
<dbReference type="PANTHER" id="PTHR14315:SF18">
    <property type="entry name" value="THYROID HORMONE-INDUCIBLE HEPATIC PROTEIN"/>
    <property type="match status" value="1"/>
</dbReference>
<dbReference type="Pfam" id="PF07084">
    <property type="entry name" value="Spot_14"/>
    <property type="match status" value="1"/>
</dbReference>
<gene>
    <name type="primary">Thrsp</name>
    <name type="synonym">S14</name>
</gene>
<organism>
    <name type="scientific">Mus musculus</name>
    <name type="common">Mouse</name>
    <dbReference type="NCBI Taxonomy" id="10090"/>
    <lineage>
        <taxon>Eukaryota</taxon>
        <taxon>Metazoa</taxon>
        <taxon>Chordata</taxon>
        <taxon>Craniata</taxon>
        <taxon>Vertebrata</taxon>
        <taxon>Euteleostomi</taxon>
        <taxon>Mammalia</taxon>
        <taxon>Eutheria</taxon>
        <taxon>Euarchontoglires</taxon>
        <taxon>Glires</taxon>
        <taxon>Rodentia</taxon>
        <taxon>Myomorpha</taxon>
        <taxon>Muroidea</taxon>
        <taxon>Muridae</taxon>
        <taxon>Murinae</taxon>
        <taxon>Mus</taxon>
        <taxon>Mus</taxon>
    </lineage>
</organism>
<accession>Q62264</accession>
<comment type="function">
    <text evidence="1 5 7">Plays a role in the regulation of lipogenesis, especially in lactating mammary gland. Important for the biosynthesis of triglycerides with medium-length fatty acid chains. May modulate lipogenesis by interacting with MID1IP1 and preventing its interaction with ACACA. May function as transcriptional coactivator. May modulate the transcription factor activity of THRB (By similarity).</text>
</comment>
<comment type="subunit">
    <text evidence="1">Homodimer. Heterodimer with MID1IP1. Interacts with THRB and PLAGL1 (By similarity).</text>
</comment>
<comment type="interaction">
    <interactant intactId="EBI-15853187">
        <id>Q62264</id>
    </interactant>
    <interactant intactId="EBI-15853187">
        <id>Q62264</id>
        <label>Thrsp</label>
    </interactant>
    <organismsDiffer>false</organismsDiffer>
    <experiments>3</experiments>
</comment>
<comment type="interaction">
    <interactant intactId="EBI-15853187">
        <id>Q62264</id>
    </interactant>
    <interactant intactId="EBI-15884821">
        <id>G3H9D1</id>
        <label>I79_006999</label>
    </interactant>
    <organismsDiffer>true</organismsDiffer>
    <experiments>2</experiments>
</comment>
<comment type="subcellular location">
    <subcellularLocation>
        <location evidence="7">Nucleus</location>
    </subcellularLocation>
    <subcellularLocation>
        <location evidence="7">Cytoplasm</location>
    </subcellularLocation>
</comment>
<comment type="tissue specificity">
    <text evidence="5">Mainly expressed in tissues that synthesize triglycerides.</text>
</comment>
<comment type="disruption phenotype">
    <text evidence="4 5 6">Decreased lipid synthesis in the lactating mammary gland. Milk has reduced triglyceride content, causing reduced weight gain in nursing pups. Adults exhibit reduced body fat content. No effect on lipid synthesis in liver. No effect on the expression of thyroid hormone-induced lipogenic genes.</text>
</comment>
<comment type="similarity">
    <text evidence="8">Belongs to the SPOT14 family.</text>
</comment>
<feature type="chain" id="PRO_0000123774" description="Thyroid hormone-inducible hepatic protein">
    <location>
        <begin position="1"/>
        <end position="150"/>
    </location>
</feature>
<feature type="region of interest" description="Disordered" evidence="3">
    <location>
        <begin position="83"/>
        <end position="104"/>
    </location>
</feature>
<feature type="compositionally biased region" description="Acidic residues" evidence="3">
    <location>
        <begin position="90"/>
        <end position="104"/>
    </location>
</feature>
<feature type="modified residue" description="Phosphoserine" evidence="2">
    <location>
        <position position="90"/>
    </location>
</feature>
<feature type="helix" evidence="9">
    <location>
        <begin position="13"/>
        <end position="30"/>
    </location>
</feature>
<feature type="helix" evidence="9">
    <location>
        <begin position="34"/>
        <end position="37"/>
    </location>
</feature>
<feature type="strand" evidence="9">
    <location>
        <begin position="51"/>
        <end position="53"/>
    </location>
</feature>
<feature type="helix" evidence="9">
    <location>
        <begin position="56"/>
        <end position="71"/>
    </location>
</feature>
<feature type="helix" evidence="9">
    <location>
        <begin position="108"/>
        <end position="111"/>
    </location>
</feature>
<feature type="helix" evidence="9">
    <location>
        <begin position="113"/>
        <end position="145"/>
    </location>
</feature>
<keyword id="KW-0002">3D-structure</keyword>
<keyword id="KW-0963">Cytoplasm</keyword>
<keyword id="KW-0444">Lipid biosynthesis</keyword>
<keyword id="KW-0443">Lipid metabolism</keyword>
<keyword id="KW-0539">Nucleus</keyword>
<keyword id="KW-0597">Phosphoprotein</keyword>
<keyword id="KW-1185">Reference proteome</keyword>
<keyword id="KW-0804">Transcription</keyword>
<keyword id="KW-0805">Transcription regulation</keyword>
<proteinExistence type="evidence at protein level"/>